<organism>
    <name type="scientific">Lactococcus lactis subsp. lactis (strain IL1403)</name>
    <name type="common">Streptococcus lactis</name>
    <dbReference type="NCBI Taxonomy" id="272623"/>
    <lineage>
        <taxon>Bacteria</taxon>
        <taxon>Bacillati</taxon>
        <taxon>Bacillota</taxon>
        <taxon>Bacilli</taxon>
        <taxon>Lactobacillales</taxon>
        <taxon>Streptococcaceae</taxon>
        <taxon>Lactococcus</taxon>
    </lineage>
</organism>
<evidence type="ECO:0000255" key="1">
    <source>
        <dbReference type="HAMAP-Rule" id="MF_00196"/>
    </source>
</evidence>
<gene>
    <name evidence="1" type="primary">mtlD</name>
    <name type="ordered locus">LL0024</name>
    <name type="ORF">L33416</name>
</gene>
<sequence length="385" mass="43673">MKKAVHFGAGNIGRGFIGEILSKNGFDIHFVDTNKSIIAELNNRHSYEIGIASSEHEKISVKAVSGINNSENPEAVIEAIAKADILTTAIGPNVLPYIAELIAKGLQKRKEEKVQSPLDIIACENMIGGSEFLEEKVSDYLSESDKLYLSKFIGFPNAAVDRIVPAQKHKDVLYVEVEPFSEWVIDASHLKNKEIKLEGVHYTTDLEPFIERKLFSVNSGHAAVAYSSAYKGYKTILEGLQDEEILNILKAVQKETRALLLAKWAQYFKQDELIKYHELIISRFSNPEIIDEVSRVARTPIRKLGYDERFIRPIRELNDRKLSYQNHLDIVGKIFAYHDENDAQAIQLQEKLKITELPMLIEEVTGLSNQKLILEIEKVINHYKK</sequence>
<accession>Q9CJH1</accession>
<feature type="chain" id="PRO_0000170708" description="Mannitol-1-phosphate 5-dehydrogenase">
    <location>
        <begin position="1"/>
        <end position="385"/>
    </location>
</feature>
<feature type="binding site" evidence="1">
    <location>
        <begin position="4"/>
        <end position="15"/>
    </location>
    <ligand>
        <name>NAD(+)</name>
        <dbReference type="ChEBI" id="CHEBI:57540"/>
    </ligand>
</feature>
<reference key="1">
    <citation type="journal article" date="2001" name="Genome Res.">
        <title>The complete genome sequence of the lactic acid bacterium Lactococcus lactis ssp. lactis IL1403.</title>
        <authorList>
            <person name="Bolotin A."/>
            <person name="Wincker P."/>
            <person name="Mauger S."/>
            <person name="Jaillon O."/>
            <person name="Malarme K."/>
            <person name="Weissenbach J."/>
            <person name="Ehrlich S.D."/>
            <person name="Sorokin A."/>
        </authorList>
    </citation>
    <scope>NUCLEOTIDE SEQUENCE [LARGE SCALE GENOMIC DNA]</scope>
    <source>
        <strain>IL1403</strain>
    </source>
</reference>
<comment type="catalytic activity">
    <reaction evidence="1">
        <text>D-mannitol 1-phosphate + NAD(+) = beta-D-fructose 6-phosphate + NADH + H(+)</text>
        <dbReference type="Rhea" id="RHEA:19661"/>
        <dbReference type="ChEBI" id="CHEBI:15378"/>
        <dbReference type="ChEBI" id="CHEBI:57540"/>
        <dbReference type="ChEBI" id="CHEBI:57634"/>
        <dbReference type="ChEBI" id="CHEBI:57945"/>
        <dbReference type="ChEBI" id="CHEBI:61381"/>
        <dbReference type="EC" id="1.1.1.17"/>
    </reaction>
</comment>
<comment type="similarity">
    <text evidence="1">Belongs to the mannitol dehydrogenase family.</text>
</comment>
<keyword id="KW-0520">NAD</keyword>
<keyword id="KW-0560">Oxidoreductase</keyword>
<keyword id="KW-1185">Reference proteome</keyword>
<protein>
    <recommendedName>
        <fullName evidence="1">Mannitol-1-phosphate 5-dehydrogenase</fullName>
        <ecNumber evidence="1">1.1.1.17</ecNumber>
    </recommendedName>
</protein>
<name>MTLD_LACLA</name>
<dbReference type="EC" id="1.1.1.17" evidence="1"/>
<dbReference type="EMBL" id="AE005176">
    <property type="protein sequence ID" value="AAK04122.1"/>
    <property type="molecule type" value="Genomic_DNA"/>
</dbReference>
<dbReference type="PIR" id="H86627">
    <property type="entry name" value="H86627"/>
</dbReference>
<dbReference type="RefSeq" id="NP_266180.1">
    <property type="nucleotide sequence ID" value="NC_002662.1"/>
</dbReference>
<dbReference type="RefSeq" id="WP_010905040.1">
    <property type="nucleotide sequence ID" value="NC_002662.1"/>
</dbReference>
<dbReference type="SMR" id="Q9CJH1"/>
<dbReference type="PaxDb" id="272623-L33416"/>
<dbReference type="EnsemblBacteria" id="AAK04122">
    <property type="protein sequence ID" value="AAK04122"/>
    <property type="gene ID" value="L33416"/>
</dbReference>
<dbReference type="KEGG" id="lla:L33416"/>
<dbReference type="PATRIC" id="fig|272623.7.peg.28"/>
<dbReference type="eggNOG" id="COG0246">
    <property type="taxonomic scope" value="Bacteria"/>
</dbReference>
<dbReference type="HOGENOM" id="CLU_036089_2_0_9"/>
<dbReference type="OrthoDB" id="271711at2"/>
<dbReference type="Proteomes" id="UP000002196">
    <property type="component" value="Chromosome"/>
</dbReference>
<dbReference type="GO" id="GO:0005829">
    <property type="term" value="C:cytosol"/>
    <property type="evidence" value="ECO:0007669"/>
    <property type="project" value="TreeGrafter"/>
</dbReference>
<dbReference type="GO" id="GO:0008926">
    <property type="term" value="F:mannitol-1-phosphate 5-dehydrogenase activity"/>
    <property type="evidence" value="ECO:0007669"/>
    <property type="project" value="UniProtKB-UniRule"/>
</dbReference>
<dbReference type="GO" id="GO:0019592">
    <property type="term" value="P:mannitol catabolic process"/>
    <property type="evidence" value="ECO:0007669"/>
    <property type="project" value="TreeGrafter"/>
</dbReference>
<dbReference type="Gene3D" id="1.10.1040.10">
    <property type="entry name" value="N-(1-d-carboxylethyl)-l-norvaline Dehydrogenase, domain 2"/>
    <property type="match status" value="1"/>
</dbReference>
<dbReference type="Gene3D" id="3.40.50.720">
    <property type="entry name" value="NAD(P)-binding Rossmann-like Domain"/>
    <property type="match status" value="1"/>
</dbReference>
<dbReference type="HAMAP" id="MF_00196">
    <property type="entry name" value="Mannitol_dehydrog"/>
    <property type="match status" value="1"/>
</dbReference>
<dbReference type="InterPro" id="IPR008927">
    <property type="entry name" value="6-PGluconate_DH-like_C_sf"/>
</dbReference>
<dbReference type="InterPro" id="IPR013328">
    <property type="entry name" value="6PGD_dom2"/>
</dbReference>
<dbReference type="InterPro" id="IPR023028">
    <property type="entry name" value="Mannitol_1_phos_5_DH"/>
</dbReference>
<dbReference type="InterPro" id="IPR000669">
    <property type="entry name" value="Mannitol_DH"/>
</dbReference>
<dbReference type="InterPro" id="IPR013118">
    <property type="entry name" value="Mannitol_DH_C"/>
</dbReference>
<dbReference type="InterPro" id="IPR023027">
    <property type="entry name" value="Mannitol_DH_CS"/>
</dbReference>
<dbReference type="InterPro" id="IPR013131">
    <property type="entry name" value="Mannitol_DH_N"/>
</dbReference>
<dbReference type="InterPro" id="IPR036291">
    <property type="entry name" value="NAD(P)-bd_dom_sf"/>
</dbReference>
<dbReference type="NCBIfam" id="NF002647">
    <property type="entry name" value="PRK02318.1-3"/>
    <property type="match status" value="1"/>
</dbReference>
<dbReference type="NCBIfam" id="NF002652">
    <property type="entry name" value="PRK02318.2-5"/>
    <property type="match status" value="1"/>
</dbReference>
<dbReference type="PANTHER" id="PTHR30524:SF0">
    <property type="entry name" value="ALTRONATE OXIDOREDUCTASE-RELATED"/>
    <property type="match status" value="1"/>
</dbReference>
<dbReference type="PANTHER" id="PTHR30524">
    <property type="entry name" value="MANNITOL-1-PHOSPHATE 5-DEHYDROGENASE"/>
    <property type="match status" value="1"/>
</dbReference>
<dbReference type="Pfam" id="PF01232">
    <property type="entry name" value="Mannitol_dh"/>
    <property type="match status" value="1"/>
</dbReference>
<dbReference type="Pfam" id="PF08125">
    <property type="entry name" value="Mannitol_dh_C"/>
    <property type="match status" value="1"/>
</dbReference>
<dbReference type="PRINTS" id="PR00084">
    <property type="entry name" value="MTLDHDRGNASE"/>
</dbReference>
<dbReference type="SUPFAM" id="SSF48179">
    <property type="entry name" value="6-phosphogluconate dehydrogenase C-terminal domain-like"/>
    <property type="match status" value="1"/>
</dbReference>
<dbReference type="SUPFAM" id="SSF51735">
    <property type="entry name" value="NAD(P)-binding Rossmann-fold domains"/>
    <property type="match status" value="1"/>
</dbReference>
<dbReference type="PROSITE" id="PS00974">
    <property type="entry name" value="MANNITOL_DHGENASE"/>
    <property type="match status" value="1"/>
</dbReference>
<proteinExistence type="inferred from homology"/>